<dbReference type="EMBL" id="CP000088">
    <property type="protein sequence ID" value="AAZ56676.1"/>
    <property type="molecule type" value="Genomic_DNA"/>
</dbReference>
<dbReference type="RefSeq" id="WP_011293066.1">
    <property type="nucleotide sequence ID" value="NC_007333.1"/>
</dbReference>
<dbReference type="SMR" id="Q47LJ6"/>
<dbReference type="STRING" id="269800.Tfu_2643"/>
<dbReference type="KEGG" id="tfu:Tfu_2643"/>
<dbReference type="eggNOG" id="COG0090">
    <property type="taxonomic scope" value="Bacteria"/>
</dbReference>
<dbReference type="HOGENOM" id="CLU_036235_2_1_11"/>
<dbReference type="OrthoDB" id="9778722at2"/>
<dbReference type="GO" id="GO:0015934">
    <property type="term" value="C:large ribosomal subunit"/>
    <property type="evidence" value="ECO:0007669"/>
    <property type="project" value="InterPro"/>
</dbReference>
<dbReference type="GO" id="GO:0019843">
    <property type="term" value="F:rRNA binding"/>
    <property type="evidence" value="ECO:0007669"/>
    <property type="project" value="UniProtKB-UniRule"/>
</dbReference>
<dbReference type="GO" id="GO:0003735">
    <property type="term" value="F:structural constituent of ribosome"/>
    <property type="evidence" value="ECO:0007669"/>
    <property type="project" value="InterPro"/>
</dbReference>
<dbReference type="GO" id="GO:0016740">
    <property type="term" value="F:transferase activity"/>
    <property type="evidence" value="ECO:0007669"/>
    <property type="project" value="InterPro"/>
</dbReference>
<dbReference type="GO" id="GO:0002181">
    <property type="term" value="P:cytoplasmic translation"/>
    <property type="evidence" value="ECO:0007669"/>
    <property type="project" value="TreeGrafter"/>
</dbReference>
<dbReference type="FunFam" id="2.30.30.30:FF:000001">
    <property type="entry name" value="50S ribosomal protein L2"/>
    <property type="match status" value="1"/>
</dbReference>
<dbReference type="FunFam" id="2.40.50.140:FF:000003">
    <property type="entry name" value="50S ribosomal protein L2"/>
    <property type="match status" value="1"/>
</dbReference>
<dbReference type="FunFam" id="4.10.950.10:FF:000001">
    <property type="entry name" value="50S ribosomal protein L2"/>
    <property type="match status" value="1"/>
</dbReference>
<dbReference type="Gene3D" id="2.30.30.30">
    <property type="match status" value="1"/>
</dbReference>
<dbReference type="Gene3D" id="2.40.50.140">
    <property type="entry name" value="Nucleic acid-binding proteins"/>
    <property type="match status" value="1"/>
</dbReference>
<dbReference type="Gene3D" id="4.10.950.10">
    <property type="entry name" value="Ribosomal protein L2, domain 3"/>
    <property type="match status" value="1"/>
</dbReference>
<dbReference type="HAMAP" id="MF_01320_B">
    <property type="entry name" value="Ribosomal_uL2_B"/>
    <property type="match status" value="1"/>
</dbReference>
<dbReference type="InterPro" id="IPR012340">
    <property type="entry name" value="NA-bd_OB-fold"/>
</dbReference>
<dbReference type="InterPro" id="IPR014722">
    <property type="entry name" value="Rib_uL2_dom2"/>
</dbReference>
<dbReference type="InterPro" id="IPR002171">
    <property type="entry name" value="Ribosomal_uL2"/>
</dbReference>
<dbReference type="InterPro" id="IPR005880">
    <property type="entry name" value="Ribosomal_uL2_bac/org-type"/>
</dbReference>
<dbReference type="InterPro" id="IPR022669">
    <property type="entry name" value="Ribosomal_uL2_C"/>
</dbReference>
<dbReference type="InterPro" id="IPR022671">
    <property type="entry name" value="Ribosomal_uL2_CS"/>
</dbReference>
<dbReference type="InterPro" id="IPR014726">
    <property type="entry name" value="Ribosomal_uL2_dom3"/>
</dbReference>
<dbReference type="InterPro" id="IPR022666">
    <property type="entry name" value="Ribosomal_uL2_RNA-bd_dom"/>
</dbReference>
<dbReference type="InterPro" id="IPR008991">
    <property type="entry name" value="Translation_prot_SH3-like_sf"/>
</dbReference>
<dbReference type="NCBIfam" id="TIGR01171">
    <property type="entry name" value="rplB_bact"/>
    <property type="match status" value="1"/>
</dbReference>
<dbReference type="PANTHER" id="PTHR13691:SF5">
    <property type="entry name" value="LARGE RIBOSOMAL SUBUNIT PROTEIN UL2M"/>
    <property type="match status" value="1"/>
</dbReference>
<dbReference type="PANTHER" id="PTHR13691">
    <property type="entry name" value="RIBOSOMAL PROTEIN L2"/>
    <property type="match status" value="1"/>
</dbReference>
<dbReference type="Pfam" id="PF00181">
    <property type="entry name" value="Ribosomal_L2"/>
    <property type="match status" value="1"/>
</dbReference>
<dbReference type="Pfam" id="PF03947">
    <property type="entry name" value="Ribosomal_L2_C"/>
    <property type="match status" value="1"/>
</dbReference>
<dbReference type="PIRSF" id="PIRSF002158">
    <property type="entry name" value="Ribosomal_L2"/>
    <property type="match status" value="1"/>
</dbReference>
<dbReference type="SMART" id="SM01383">
    <property type="entry name" value="Ribosomal_L2"/>
    <property type="match status" value="1"/>
</dbReference>
<dbReference type="SMART" id="SM01382">
    <property type="entry name" value="Ribosomal_L2_C"/>
    <property type="match status" value="1"/>
</dbReference>
<dbReference type="SUPFAM" id="SSF50249">
    <property type="entry name" value="Nucleic acid-binding proteins"/>
    <property type="match status" value="1"/>
</dbReference>
<dbReference type="SUPFAM" id="SSF50104">
    <property type="entry name" value="Translation proteins SH3-like domain"/>
    <property type="match status" value="1"/>
</dbReference>
<dbReference type="PROSITE" id="PS00467">
    <property type="entry name" value="RIBOSOMAL_L2"/>
    <property type="match status" value="1"/>
</dbReference>
<name>RL2_THEFY</name>
<keyword id="KW-0687">Ribonucleoprotein</keyword>
<keyword id="KW-0689">Ribosomal protein</keyword>
<keyword id="KW-0694">RNA-binding</keyword>
<keyword id="KW-0699">rRNA-binding</keyword>
<comment type="function">
    <text evidence="1">One of the primary rRNA binding proteins. Required for association of the 30S and 50S subunits to form the 70S ribosome, for tRNA binding and peptide bond formation. It has been suggested to have peptidyltransferase activity; this is somewhat controversial. Makes several contacts with the 16S rRNA in the 70S ribosome.</text>
</comment>
<comment type="subunit">
    <text evidence="1">Part of the 50S ribosomal subunit. Forms a bridge to the 30S subunit in the 70S ribosome.</text>
</comment>
<comment type="similarity">
    <text evidence="1">Belongs to the universal ribosomal protein uL2 family.</text>
</comment>
<sequence length="277" mass="30146">MGIRKYKPTSPGRRGGSVSTFAEITRSKPEKSLVRPLHSKGGRNGHGRITARHQGGGHKRAYRLIDFRRHDKDGIPAKVAHIEYDPNRTARIALLHYVDGEKRYILAPVGLKQGDRVENGPAADIKPGNCLPLRNIPTGTFVHAVELKPGGGAKLGRAAGAAIQLLAKEGAYATLRMPSGEMRQVEVACRATVGQVGNVEHANISWGKAGRMRWKGKRPSVRGVAMNPIDHPHGGGEGRTSGGRHPVSPWGKAEGRTRKKGKPSDRLIVRRRSKKKR</sequence>
<evidence type="ECO:0000255" key="1">
    <source>
        <dbReference type="HAMAP-Rule" id="MF_01320"/>
    </source>
</evidence>
<evidence type="ECO:0000256" key="2">
    <source>
        <dbReference type="SAM" id="MobiDB-lite"/>
    </source>
</evidence>
<evidence type="ECO:0000305" key="3"/>
<protein>
    <recommendedName>
        <fullName evidence="1">Large ribosomal subunit protein uL2</fullName>
    </recommendedName>
    <alternativeName>
        <fullName evidence="3">50S ribosomal protein L2</fullName>
    </alternativeName>
</protein>
<reference key="1">
    <citation type="journal article" date="2007" name="J. Bacteriol.">
        <title>Genome sequence and analysis of the soil cellulolytic actinomycete Thermobifida fusca YX.</title>
        <authorList>
            <person name="Lykidis A."/>
            <person name="Mavromatis K."/>
            <person name="Ivanova N."/>
            <person name="Anderson I."/>
            <person name="Land M."/>
            <person name="DiBartolo G."/>
            <person name="Martinez M."/>
            <person name="Lapidus A."/>
            <person name="Lucas S."/>
            <person name="Copeland A."/>
            <person name="Richardson P."/>
            <person name="Wilson D.B."/>
            <person name="Kyrpides N."/>
        </authorList>
    </citation>
    <scope>NUCLEOTIDE SEQUENCE [LARGE SCALE GENOMIC DNA]</scope>
    <source>
        <strain>YX</strain>
    </source>
</reference>
<organism>
    <name type="scientific">Thermobifida fusca (strain YX)</name>
    <dbReference type="NCBI Taxonomy" id="269800"/>
    <lineage>
        <taxon>Bacteria</taxon>
        <taxon>Bacillati</taxon>
        <taxon>Actinomycetota</taxon>
        <taxon>Actinomycetes</taxon>
        <taxon>Streptosporangiales</taxon>
        <taxon>Nocardiopsidaceae</taxon>
        <taxon>Thermobifida</taxon>
    </lineage>
</organism>
<gene>
    <name evidence="1" type="primary">rplB</name>
    <name type="ordered locus">Tfu_2643</name>
</gene>
<feature type="chain" id="PRO_0000237258" description="Large ribosomal subunit protein uL2">
    <location>
        <begin position="1"/>
        <end position="277"/>
    </location>
</feature>
<feature type="region of interest" description="Disordered" evidence="2">
    <location>
        <begin position="1"/>
        <end position="55"/>
    </location>
</feature>
<feature type="region of interest" description="Disordered" evidence="2">
    <location>
        <begin position="217"/>
        <end position="277"/>
    </location>
</feature>
<feature type="compositionally biased region" description="Basic residues" evidence="2">
    <location>
        <begin position="37"/>
        <end position="55"/>
    </location>
</feature>
<proteinExistence type="inferred from homology"/>
<accession>Q47LJ6</accession>